<proteinExistence type="inferred from homology"/>
<name>MATP_YERPY</name>
<reference key="1">
    <citation type="submission" date="2008-02" db="EMBL/GenBank/DDBJ databases">
        <title>Complete sequence of Yersinia pseudotuberculosis YPIII.</title>
        <authorList>
            <consortium name="US DOE Joint Genome Institute"/>
            <person name="Copeland A."/>
            <person name="Lucas S."/>
            <person name="Lapidus A."/>
            <person name="Glavina del Rio T."/>
            <person name="Dalin E."/>
            <person name="Tice H."/>
            <person name="Bruce D."/>
            <person name="Goodwin L."/>
            <person name="Pitluck S."/>
            <person name="Munk A.C."/>
            <person name="Brettin T."/>
            <person name="Detter J.C."/>
            <person name="Han C."/>
            <person name="Tapia R."/>
            <person name="Schmutz J."/>
            <person name="Larimer F."/>
            <person name="Land M."/>
            <person name="Hauser L."/>
            <person name="Challacombe J.F."/>
            <person name="Green L."/>
            <person name="Lindler L.E."/>
            <person name="Nikolich M.P."/>
            <person name="Richardson P."/>
        </authorList>
    </citation>
    <scope>NUCLEOTIDE SEQUENCE [LARGE SCALE GENOMIC DNA]</scope>
    <source>
        <strain>YPIII</strain>
    </source>
</reference>
<comment type="function">
    <text evidence="1">Required for spatial organization of the terminus region of the chromosome (Ter macrodomain) during the cell cycle. Prevents early segregation of duplicated Ter macrodomains during cell division. Binds specifically to matS, which is a 13 bp signature motif repeated within the Ter macrodomain.</text>
</comment>
<comment type="subunit">
    <text evidence="1">Homodimer.</text>
</comment>
<comment type="subcellular location">
    <subcellularLocation>
        <location evidence="1">Cytoplasm</location>
    </subcellularLocation>
</comment>
<comment type="similarity">
    <text evidence="1">Belongs to the MatP family.</text>
</comment>
<dbReference type="EMBL" id="CP000950">
    <property type="protein sequence ID" value="ACA68909.1"/>
    <property type="molecule type" value="Genomic_DNA"/>
</dbReference>
<dbReference type="RefSeq" id="WP_002226586.1">
    <property type="nucleotide sequence ID" value="NZ_CP009792.1"/>
</dbReference>
<dbReference type="SMR" id="B1JQQ8"/>
<dbReference type="GeneID" id="57977130"/>
<dbReference type="KEGG" id="ypy:YPK_2632"/>
<dbReference type="PATRIC" id="fig|502800.11.peg.3331"/>
<dbReference type="GO" id="GO:0005737">
    <property type="term" value="C:cytoplasm"/>
    <property type="evidence" value="ECO:0007669"/>
    <property type="project" value="UniProtKB-SubCell"/>
</dbReference>
<dbReference type="GO" id="GO:0043565">
    <property type="term" value="F:sequence-specific DNA binding"/>
    <property type="evidence" value="ECO:0007669"/>
    <property type="project" value="UniProtKB-UniRule"/>
</dbReference>
<dbReference type="GO" id="GO:0051301">
    <property type="term" value="P:cell division"/>
    <property type="evidence" value="ECO:0007669"/>
    <property type="project" value="UniProtKB-UniRule"/>
</dbReference>
<dbReference type="GO" id="GO:0006355">
    <property type="term" value="P:regulation of DNA-templated transcription"/>
    <property type="evidence" value="ECO:0007669"/>
    <property type="project" value="InterPro"/>
</dbReference>
<dbReference type="Gene3D" id="1.20.1270.380">
    <property type="entry name" value="MatP, N-terminal domain"/>
    <property type="match status" value="1"/>
</dbReference>
<dbReference type="Gene3D" id="1.10.1220.10">
    <property type="entry name" value="Met repressor-like"/>
    <property type="match status" value="1"/>
</dbReference>
<dbReference type="HAMAP" id="MF_01073">
    <property type="entry name" value="MatP"/>
    <property type="match status" value="1"/>
</dbReference>
<dbReference type="InterPro" id="IPR013321">
    <property type="entry name" value="Arc_rbn_hlx_hlx"/>
</dbReference>
<dbReference type="InterPro" id="IPR009390">
    <property type="entry name" value="MatP"/>
</dbReference>
<dbReference type="InterPro" id="IPR035375">
    <property type="entry name" value="MatP_C"/>
</dbReference>
<dbReference type="InterPro" id="IPR035087">
    <property type="entry name" value="MatP_N"/>
</dbReference>
<dbReference type="InterPro" id="IPR038339">
    <property type="entry name" value="MatP_N_sf"/>
</dbReference>
<dbReference type="NCBIfam" id="NF003471">
    <property type="entry name" value="PRK05097.1"/>
    <property type="match status" value="1"/>
</dbReference>
<dbReference type="Pfam" id="PF06303">
    <property type="entry name" value="MatP"/>
    <property type="match status" value="1"/>
</dbReference>
<dbReference type="Pfam" id="PF17414">
    <property type="entry name" value="MatP_C"/>
    <property type="match status" value="1"/>
</dbReference>
<accession>B1JQQ8</accession>
<evidence type="ECO:0000255" key="1">
    <source>
        <dbReference type="HAMAP-Rule" id="MF_01073"/>
    </source>
</evidence>
<sequence>MKYQQLENLESGWKWAYLVKKHREGEAITRHIENSAAQDAVEQLMKLENEPVKVQEWIDAHMNVNLATRMKQTIRARRKRHFNAEHQHTRKKSIDLEFLVWQRLAVLARRRGNTLSDTVVQLIEDAERKEKYASQMSSLKQDLKDILDKEV</sequence>
<organism>
    <name type="scientific">Yersinia pseudotuberculosis serotype O:3 (strain YPIII)</name>
    <dbReference type="NCBI Taxonomy" id="502800"/>
    <lineage>
        <taxon>Bacteria</taxon>
        <taxon>Pseudomonadati</taxon>
        <taxon>Pseudomonadota</taxon>
        <taxon>Gammaproteobacteria</taxon>
        <taxon>Enterobacterales</taxon>
        <taxon>Yersiniaceae</taxon>
        <taxon>Yersinia</taxon>
    </lineage>
</organism>
<keyword id="KW-0131">Cell cycle</keyword>
<keyword id="KW-0132">Cell division</keyword>
<keyword id="KW-0963">Cytoplasm</keyword>
<keyword id="KW-0238">DNA-binding</keyword>
<protein>
    <recommendedName>
        <fullName evidence="1">Macrodomain Ter protein</fullName>
    </recommendedName>
</protein>
<feature type="chain" id="PRO_1000136683" description="Macrodomain Ter protein">
    <location>
        <begin position="1"/>
        <end position="151"/>
    </location>
</feature>
<gene>
    <name evidence="1" type="primary">matP</name>
    <name type="ordered locus">YPK_2632</name>
</gene>